<feature type="chain" id="PRO_0000102829" description="Succinate--CoA ligase [ADP-forming] subunit beta">
    <location>
        <begin position="1"/>
        <end position="398"/>
    </location>
</feature>
<feature type="domain" description="ATP-grasp" evidence="1">
    <location>
        <begin position="9"/>
        <end position="237"/>
    </location>
</feature>
<feature type="binding site" evidence="1">
    <location>
        <position position="45"/>
    </location>
    <ligand>
        <name>ATP</name>
        <dbReference type="ChEBI" id="CHEBI:30616"/>
    </ligand>
</feature>
<feature type="binding site" evidence="1">
    <location>
        <begin position="52"/>
        <end position="54"/>
    </location>
    <ligand>
        <name>ATP</name>
        <dbReference type="ChEBI" id="CHEBI:30616"/>
    </ligand>
</feature>
<feature type="binding site" evidence="1">
    <location>
        <position position="94"/>
    </location>
    <ligand>
        <name>ATP</name>
        <dbReference type="ChEBI" id="CHEBI:30616"/>
    </ligand>
</feature>
<feature type="binding site" evidence="1">
    <location>
        <position position="99"/>
    </location>
    <ligand>
        <name>ATP</name>
        <dbReference type="ChEBI" id="CHEBI:30616"/>
    </ligand>
</feature>
<feature type="binding site" evidence="1">
    <location>
        <position position="191"/>
    </location>
    <ligand>
        <name>Mg(2+)</name>
        <dbReference type="ChEBI" id="CHEBI:18420"/>
    </ligand>
</feature>
<feature type="binding site" evidence="1">
    <location>
        <position position="205"/>
    </location>
    <ligand>
        <name>Mg(2+)</name>
        <dbReference type="ChEBI" id="CHEBI:18420"/>
    </ligand>
</feature>
<feature type="binding site" evidence="1">
    <location>
        <position position="257"/>
    </location>
    <ligand>
        <name>substrate</name>
        <note>ligand shared with subunit alpha</note>
    </ligand>
</feature>
<feature type="binding site" evidence="1">
    <location>
        <begin position="319"/>
        <end position="321"/>
    </location>
    <ligand>
        <name>substrate</name>
        <note>ligand shared with subunit alpha</note>
    </ligand>
</feature>
<keyword id="KW-0067">ATP-binding</keyword>
<keyword id="KW-0436">Ligase</keyword>
<keyword id="KW-0460">Magnesium</keyword>
<keyword id="KW-0479">Metal-binding</keyword>
<keyword id="KW-0547">Nucleotide-binding</keyword>
<keyword id="KW-1185">Reference proteome</keyword>
<keyword id="KW-0816">Tricarboxylic acid cycle</keyword>
<comment type="function">
    <text evidence="1">Succinyl-CoA synthetase functions in the citric acid cycle (TCA), coupling the hydrolysis of succinyl-CoA to the synthesis of either ATP or GTP and thus represents the only step of substrate-level phosphorylation in the TCA. The beta subunit provides nucleotide specificity of the enzyme and binds the substrate succinate, while the binding sites for coenzyme A and phosphate are found in the alpha subunit.</text>
</comment>
<comment type="catalytic activity">
    <reaction evidence="1">
        <text>succinate + ATP + CoA = succinyl-CoA + ADP + phosphate</text>
        <dbReference type="Rhea" id="RHEA:17661"/>
        <dbReference type="ChEBI" id="CHEBI:30031"/>
        <dbReference type="ChEBI" id="CHEBI:30616"/>
        <dbReference type="ChEBI" id="CHEBI:43474"/>
        <dbReference type="ChEBI" id="CHEBI:57287"/>
        <dbReference type="ChEBI" id="CHEBI:57292"/>
        <dbReference type="ChEBI" id="CHEBI:456216"/>
        <dbReference type="EC" id="6.2.1.5"/>
    </reaction>
    <physiologicalReaction direction="right-to-left" evidence="1">
        <dbReference type="Rhea" id="RHEA:17663"/>
    </physiologicalReaction>
</comment>
<comment type="catalytic activity">
    <reaction evidence="1">
        <text>GTP + succinate + CoA = succinyl-CoA + GDP + phosphate</text>
        <dbReference type="Rhea" id="RHEA:22120"/>
        <dbReference type="ChEBI" id="CHEBI:30031"/>
        <dbReference type="ChEBI" id="CHEBI:37565"/>
        <dbReference type="ChEBI" id="CHEBI:43474"/>
        <dbReference type="ChEBI" id="CHEBI:57287"/>
        <dbReference type="ChEBI" id="CHEBI:57292"/>
        <dbReference type="ChEBI" id="CHEBI:58189"/>
    </reaction>
    <physiologicalReaction direction="right-to-left" evidence="1">
        <dbReference type="Rhea" id="RHEA:22122"/>
    </physiologicalReaction>
</comment>
<comment type="cofactor">
    <cofactor evidence="1">
        <name>Mg(2+)</name>
        <dbReference type="ChEBI" id="CHEBI:18420"/>
    </cofactor>
    <text evidence="1">Binds 1 Mg(2+) ion per subunit.</text>
</comment>
<comment type="pathway">
    <text evidence="1">Carbohydrate metabolism; tricarboxylic acid cycle; succinate from succinyl-CoA (ligase route): step 1/1.</text>
</comment>
<comment type="subunit">
    <text evidence="1">Heterotetramer of two alpha and two beta subunits.</text>
</comment>
<comment type="similarity">
    <text evidence="1">Belongs to the succinate/malate CoA ligase beta subunit family.</text>
</comment>
<comment type="sequence caution" evidence="2">
    <conflict type="erroneous initiation">
        <sequence resource="EMBL-CDS" id="CAF21227"/>
    </conflict>
</comment>
<protein>
    <recommendedName>
        <fullName evidence="1">Succinate--CoA ligase [ADP-forming] subunit beta</fullName>
        <ecNumber evidence="1">6.2.1.5</ecNumber>
    </recommendedName>
    <alternativeName>
        <fullName evidence="1">Succinyl-CoA synthetase subunit beta</fullName>
        <shortName evidence="1">SCS-beta</shortName>
    </alternativeName>
</protein>
<gene>
    <name evidence="1" type="primary">sucC</name>
    <name type="ordered locus">Cgl2566</name>
    <name type="ordered locus">cg2837</name>
</gene>
<name>SUCC_CORGL</name>
<sequence length="398" mass="41764">MDLFEYQARDLFETHGVPVLKGIVASTPEAARKAAEEIGGLTVVKAQVKVGGRGKAGGVRVAPTSAQAFDAADAILGMDIKGHTVNQVMVAQGADIAEEYYFSILLDRANRSYLAMCSVEGGMEIEILAKEKPEALAKVEVDPLTGIDEDKAREIVTAAGFETEVAEKVIPVLIKIWQVYYEEEATLVEVNPLVLTDDGDVIALDGKITLDDNADFRHDNRGALAESAGGLDILELKAKKNDLNYVKLDGSVGIIGNGAGLVMSTLDIVAAAGERHGGQRPANFLDIGGGASAESMAAGLDVILGDSQVRSVFVNVFGGITACDVVAKGIVGALDVLGDQATKPLVVRLDGNNVVEGRRILAEYNHPLVTVVEGMDAAADHAAHLANLAQHGQFATAN</sequence>
<evidence type="ECO:0000255" key="1">
    <source>
        <dbReference type="HAMAP-Rule" id="MF_00558"/>
    </source>
</evidence>
<evidence type="ECO:0000305" key="2"/>
<dbReference type="EC" id="6.2.1.5" evidence="1"/>
<dbReference type="EMBL" id="BA000036">
    <property type="protein sequence ID" value="BAB99959.1"/>
    <property type="molecule type" value="Genomic_DNA"/>
</dbReference>
<dbReference type="EMBL" id="BX927155">
    <property type="protein sequence ID" value="CAF21227.1"/>
    <property type="status" value="ALT_INIT"/>
    <property type="molecule type" value="Genomic_DNA"/>
</dbReference>
<dbReference type="RefSeq" id="NP_601764.2">
    <property type="nucleotide sequence ID" value="NC_003450.3"/>
</dbReference>
<dbReference type="RefSeq" id="WP_011015216.1">
    <property type="nucleotide sequence ID" value="NC_006958.1"/>
</dbReference>
<dbReference type="SMR" id="Q8NMK7"/>
<dbReference type="STRING" id="196627.cg2837"/>
<dbReference type="GeneID" id="1020512"/>
<dbReference type="KEGG" id="cgb:cg2837"/>
<dbReference type="KEGG" id="cgl:Cgl2566"/>
<dbReference type="PATRIC" id="fig|196627.13.peg.2500"/>
<dbReference type="eggNOG" id="COG0045">
    <property type="taxonomic scope" value="Bacteria"/>
</dbReference>
<dbReference type="HOGENOM" id="CLU_037430_0_2_11"/>
<dbReference type="OrthoDB" id="9802602at2"/>
<dbReference type="BioCyc" id="CORYNE:G18NG-12179-MONOMER"/>
<dbReference type="UniPathway" id="UPA00223">
    <property type="reaction ID" value="UER00999"/>
</dbReference>
<dbReference type="Proteomes" id="UP000000582">
    <property type="component" value="Chromosome"/>
</dbReference>
<dbReference type="Proteomes" id="UP000001009">
    <property type="component" value="Chromosome"/>
</dbReference>
<dbReference type="GO" id="GO:0005829">
    <property type="term" value="C:cytosol"/>
    <property type="evidence" value="ECO:0007669"/>
    <property type="project" value="TreeGrafter"/>
</dbReference>
<dbReference type="GO" id="GO:0042709">
    <property type="term" value="C:succinate-CoA ligase complex"/>
    <property type="evidence" value="ECO:0007669"/>
    <property type="project" value="TreeGrafter"/>
</dbReference>
<dbReference type="GO" id="GO:0005524">
    <property type="term" value="F:ATP binding"/>
    <property type="evidence" value="ECO:0007669"/>
    <property type="project" value="UniProtKB-UniRule"/>
</dbReference>
<dbReference type="GO" id="GO:0000287">
    <property type="term" value="F:magnesium ion binding"/>
    <property type="evidence" value="ECO:0007669"/>
    <property type="project" value="UniProtKB-UniRule"/>
</dbReference>
<dbReference type="GO" id="GO:0004775">
    <property type="term" value="F:succinate-CoA ligase (ADP-forming) activity"/>
    <property type="evidence" value="ECO:0007669"/>
    <property type="project" value="UniProtKB-UniRule"/>
</dbReference>
<dbReference type="GO" id="GO:0004776">
    <property type="term" value="F:succinate-CoA ligase (GDP-forming) activity"/>
    <property type="evidence" value="ECO:0007669"/>
    <property type="project" value="RHEA"/>
</dbReference>
<dbReference type="GO" id="GO:0006104">
    <property type="term" value="P:succinyl-CoA metabolic process"/>
    <property type="evidence" value="ECO:0007669"/>
    <property type="project" value="TreeGrafter"/>
</dbReference>
<dbReference type="GO" id="GO:0006099">
    <property type="term" value="P:tricarboxylic acid cycle"/>
    <property type="evidence" value="ECO:0007669"/>
    <property type="project" value="UniProtKB-UniRule"/>
</dbReference>
<dbReference type="FunFam" id="3.30.1490.20:FF:000014">
    <property type="entry name" value="Succinate--CoA ligase [ADP-forming] subunit beta"/>
    <property type="match status" value="1"/>
</dbReference>
<dbReference type="FunFam" id="3.30.470.20:FF:000002">
    <property type="entry name" value="Succinate--CoA ligase [ADP-forming] subunit beta"/>
    <property type="match status" value="1"/>
</dbReference>
<dbReference type="FunFam" id="3.40.50.261:FF:000007">
    <property type="entry name" value="Succinate--CoA ligase [ADP-forming] subunit beta"/>
    <property type="match status" value="1"/>
</dbReference>
<dbReference type="Gene3D" id="3.30.1490.20">
    <property type="entry name" value="ATP-grasp fold, A domain"/>
    <property type="match status" value="1"/>
</dbReference>
<dbReference type="Gene3D" id="3.30.470.20">
    <property type="entry name" value="ATP-grasp fold, B domain"/>
    <property type="match status" value="1"/>
</dbReference>
<dbReference type="Gene3D" id="3.40.50.261">
    <property type="entry name" value="Succinyl-CoA synthetase domains"/>
    <property type="match status" value="1"/>
</dbReference>
<dbReference type="HAMAP" id="MF_00558">
    <property type="entry name" value="Succ_CoA_beta"/>
    <property type="match status" value="1"/>
</dbReference>
<dbReference type="InterPro" id="IPR011761">
    <property type="entry name" value="ATP-grasp"/>
</dbReference>
<dbReference type="InterPro" id="IPR013650">
    <property type="entry name" value="ATP-grasp_succ-CoA_synth-type"/>
</dbReference>
<dbReference type="InterPro" id="IPR013815">
    <property type="entry name" value="ATP_grasp_subdomain_1"/>
</dbReference>
<dbReference type="InterPro" id="IPR017866">
    <property type="entry name" value="Succ-CoA_synthase_bsu_CS"/>
</dbReference>
<dbReference type="InterPro" id="IPR005811">
    <property type="entry name" value="SUCC_ACL_C"/>
</dbReference>
<dbReference type="InterPro" id="IPR005809">
    <property type="entry name" value="Succ_CoA_ligase-like_bsu"/>
</dbReference>
<dbReference type="InterPro" id="IPR016102">
    <property type="entry name" value="Succinyl-CoA_synth-like"/>
</dbReference>
<dbReference type="NCBIfam" id="NF001913">
    <property type="entry name" value="PRK00696.1"/>
    <property type="match status" value="1"/>
</dbReference>
<dbReference type="NCBIfam" id="TIGR01016">
    <property type="entry name" value="sucCoAbeta"/>
    <property type="match status" value="1"/>
</dbReference>
<dbReference type="PANTHER" id="PTHR11815:SF10">
    <property type="entry name" value="SUCCINATE--COA LIGASE [GDP-FORMING] SUBUNIT BETA, MITOCHONDRIAL"/>
    <property type="match status" value="1"/>
</dbReference>
<dbReference type="PANTHER" id="PTHR11815">
    <property type="entry name" value="SUCCINYL-COA SYNTHETASE BETA CHAIN"/>
    <property type="match status" value="1"/>
</dbReference>
<dbReference type="Pfam" id="PF08442">
    <property type="entry name" value="ATP-grasp_2"/>
    <property type="match status" value="1"/>
</dbReference>
<dbReference type="Pfam" id="PF00549">
    <property type="entry name" value="Ligase_CoA"/>
    <property type="match status" value="1"/>
</dbReference>
<dbReference type="PIRSF" id="PIRSF001554">
    <property type="entry name" value="SucCS_beta"/>
    <property type="match status" value="1"/>
</dbReference>
<dbReference type="SUPFAM" id="SSF56059">
    <property type="entry name" value="Glutathione synthetase ATP-binding domain-like"/>
    <property type="match status" value="1"/>
</dbReference>
<dbReference type="SUPFAM" id="SSF52210">
    <property type="entry name" value="Succinyl-CoA synthetase domains"/>
    <property type="match status" value="1"/>
</dbReference>
<dbReference type="PROSITE" id="PS50975">
    <property type="entry name" value="ATP_GRASP"/>
    <property type="match status" value="1"/>
</dbReference>
<dbReference type="PROSITE" id="PS01217">
    <property type="entry name" value="SUCCINYL_COA_LIG_3"/>
    <property type="match status" value="1"/>
</dbReference>
<reference key="1">
    <citation type="journal article" date="2003" name="Appl. Microbiol. Biotechnol.">
        <title>The Corynebacterium glutamicum genome: features and impacts on biotechnological processes.</title>
        <authorList>
            <person name="Ikeda M."/>
            <person name="Nakagawa S."/>
        </authorList>
    </citation>
    <scope>NUCLEOTIDE SEQUENCE [LARGE SCALE GENOMIC DNA]</scope>
    <source>
        <strain>ATCC 13032 / DSM 20300 / JCM 1318 / BCRC 11384 / CCUG 27702 / LMG 3730 / NBRC 12168 / NCIMB 10025 / NRRL B-2784 / 534</strain>
    </source>
</reference>
<reference key="2">
    <citation type="journal article" date="2003" name="J. Biotechnol.">
        <title>The complete Corynebacterium glutamicum ATCC 13032 genome sequence and its impact on the production of L-aspartate-derived amino acids and vitamins.</title>
        <authorList>
            <person name="Kalinowski J."/>
            <person name="Bathe B."/>
            <person name="Bartels D."/>
            <person name="Bischoff N."/>
            <person name="Bott M."/>
            <person name="Burkovski A."/>
            <person name="Dusch N."/>
            <person name="Eggeling L."/>
            <person name="Eikmanns B.J."/>
            <person name="Gaigalat L."/>
            <person name="Goesmann A."/>
            <person name="Hartmann M."/>
            <person name="Huthmacher K."/>
            <person name="Kraemer R."/>
            <person name="Linke B."/>
            <person name="McHardy A.C."/>
            <person name="Meyer F."/>
            <person name="Moeckel B."/>
            <person name="Pfefferle W."/>
            <person name="Puehler A."/>
            <person name="Rey D.A."/>
            <person name="Rueckert C."/>
            <person name="Rupp O."/>
            <person name="Sahm H."/>
            <person name="Wendisch V.F."/>
            <person name="Wiegraebe I."/>
            <person name="Tauch A."/>
        </authorList>
    </citation>
    <scope>NUCLEOTIDE SEQUENCE [LARGE SCALE GENOMIC DNA]</scope>
    <source>
        <strain>ATCC 13032 / DSM 20300 / JCM 1318 / BCRC 11384 / CCUG 27702 / LMG 3730 / NBRC 12168 / NCIMB 10025 / NRRL B-2784 / 534</strain>
    </source>
</reference>
<organism>
    <name type="scientific">Corynebacterium glutamicum (strain ATCC 13032 / DSM 20300 / JCM 1318 / BCRC 11384 / CCUG 27702 / LMG 3730 / NBRC 12168 / NCIMB 10025 / NRRL B-2784 / 534)</name>
    <dbReference type="NCBI Taxonomy" id="196627"/>
    <lineage>
        <taxon>Bacteria</taxon>
        <taxon>Bacillati</taxon>
        <taxon>Actinomycetota</taxon>
        <taxon>Actinomycetes</taxon>
        <taxon>Mycobacteriales</taxon>
        <taxon>Corynebacteriaceae</taxon>
        <taxon>Corynebacterium</taxon>
    </lineage>
</organism>
<proteinExistence type="inferred from homology"/>
<accession>Q8NMK7</accession>